<name>RL23_STAAM</name>
<reference key="1">
    <citation type="journal article" date="2001" name="Lancet">
        <title>Whole genome sequencing of meticillin-resistant Staphylococcus aureus.</title>
        <authorList>
            <person name="Kuroda M."/>
            <person name="Ohta T."/>
            <person name="Uchiyama I."/>
            <person name="Baba T."/>
            <person name="Yuzawa H."/>
            <person name="Kobayashi I."/>
            <person name="Cui L."/>
            <person name="Oguchi A."/>
            <person name="Aoki K."/>
            <person name="Nagai Y."/>
            <person name="Lian J.-Q."/>
            <person name="Ito T."/>
            <person name="Kanamori M."/>
            <person name="Matsumaru H."/>
            <person name="Maruyama A."/>
            <person name="Murakami H."/>
            <person name="Hosoyama A."/>
            <person name="Mizutani-Ui Y."/>
            <person name="Takahashi N.K."/>
            <person name="Sawano T."/>
            <person name="Inoue R."/>
            <person name="Kaito C."/>
            <person name="Sekimizu K."/>
            <person name="Hirakawa H."/>
            <person name="Kuhara S."/>
            <person name="Goto S."/>
            <person name="Yabuzaki J."/>
            <person name="Kanehisa M."/>
            <person name="Yamashita A."/>
            <person name="Oshima K."/>
            <person name="Furuya K."/>
            <person name="Yoshino C."/>
            <person name="Shiba T."/>
            <person name="Hattori M."/>
            <person name="Ogasawara N."/>
            <person name="Hayashi H."/>
            <person name="Hiramatsu K."/>
        </authorList>
    </citation>
    <scope>NUCLEOTIDE SEQUENCE [LARGE SCALE GENOMIC DNA]</scope>
    <source>
        <strain>Mu50 / ATCC 700699</strain>
    </source>
</reference>
<proteinExistence type="inferred from homology"/>
<comment type="function">
    <text evidence="1">One of the early assembly proteins it binds 23S rRNA. One of the proteins that surrounds the polypeptide exit tunnel on the outside of the ribosome. Forms the main docking site for trigger factor binding to the ribosome.</text>
</comment>
<comment type="subunit">
    <text evidence="1">Part of the 50S ribosomal subunit. Contacts protein L29, and trigger factor when it is bound to the ribosome.</text>
</comment>
<comment type="similarity">
    <text evidence="1">Belongs to the universal ribosomal protein uL23 family.</text>
</comment>
<accession>Q99S23</accession>
<gene>
    <name evidence="1" type="primary">rplW</name>
    <name type="ordered locus">SAV2248</name>
</gene>
<sequence length="91" mass="10605">MEARDILKRPVITEKSSEAMAEDKYTFDVDTRVNKTQVKMAVEEIFNVKVASVNIMNYKPKKKRMGRYQGYTNKRRKAIVTLKEGSIDLFN</sequence>
<feature type="chain" id="PRO_0000224171" description="Large ribosomal subunit protein uL23">
    <location>
        <begin position="1"/>
        <end position="91"/>
    </location>
</feature>
<dbReference type="EMBL" id="BA000017">
    <property type="protein sequence ID" value="BAB58410.1"/>
    <property type="molecule type" value="Genomic_DNA"/>
</dbReference>
<dbReference type="RefSeq" id="WP_000388082.1">
    <property type="nucleotide sequence ID" value="NC_002758.2"/>
</dbReference>
<dbReference type="SMR" id="Q99S23"/>
<dbReference type="KEGG" id="sav:SAV2248"/>
<dbReference type="HOGENOM" id="CLU_037562_3_2_9"/>
<dbReference type="PhylomeDB" id="Q99S23"/>
<dbReference type="Proteomes" id="UP000002481">
    <property type="component" value="Chromosome"/>
</dbReference>
<dbReference type="GO" id="GO:1990904">
    <property type="term" value="C:ribonucleoprotein complex"/>
    <property type="evidence" value="ECO:0007669"/>
    <property type="project" value="UniProtKB-KW"/>
</dbReference>
<dbReference type="GO" id="GO:0005840">
    <property type="term" value="C:ribosome"/>
    <property type="evidence" value="ECO:0007669"/>
    <property type="project" value="UniProtKB-KW"/>
</dbReference>
<dbReference type="GO" id="GO:0019843">
    <property type="term" value="F:rRNA binding"/>
    <property type="evidence" value="ECO:0007669"/>
    <property type="project" value="UniProtKB-UniRule"/>
</dbReference>
<dbReference type="GO" id="GO:0003735">
    <property type="term" value="F:structural constituent of ribosome"/>
    <property type="evidence" value="ECO:0007669"/>
    <property type="project" value="InterPro"/>
</dbReference>
<dbReference type="GO" id="GO:0006412">
    <property type="term" value="P:translation"/>
    <property type="evidence" value="ECO:0007669"/>
    <property type="project" value="UniProtKB-UniRule"/>
</dbReference>
<dbReference type="FunFam" id="3.30.70.330:FF:000001">
    <property type="entry name" value="50S ribosomal protein L23"/>
    <property type="match status" value="1"/>
</dbReference>
<dbReference type="Gene3D" id="3.30.70.330">
    <property type="match status" value="1"/>
</dbReference>
<dbReference type="HAMAP" id="MF_01369_B">
    <property type="entry name" value="Ribosomal_uL23_B"/>
    <property type="match status" value="1"/>
</dbReference>
<dbReference type="InterPro" id="IPR012677">
    <property type="entry name" value="Nucleotide-bd_a/b_plait_sf"/>
</dbReference>
<dbReference type="InterPro" id="IPR013025">
    <property type="entry name" value="Ribosomal_uL23-like"/>
</dbReference>
<dbReference type="InterPro" id="IPR012678">
    <property type="entry name" value="Ribosomal_uL23/eL15/eS24_sf"/>
</dbReference>
<dbReference type="NCBIfam" id="NF004363">
    <property type="entry name" value="PRK05738.2-4"/>
    <property type="match status" value="1"/>
</dbReference>
<dbReference type="PANTHER" id="PTHR11620">
    <property type="entry name" value="60S RIBOSOMAL PROTEIN L23A"/>
    <property type="match status" value="1"/>
</dbReference>
<dbReference type="Pfam" id="PF00276">
    <property type="entry name" value="Ribosomal_L23"/>
    <property type="match status" value="1"/>
</dbReference>
<dbReference type="SUPFAM" id="SSF54189">
    <property type="entry name" value="Ribosomal proteins S24e, L23 and L15e"/>
    <property type="match status" value="1"/>
</dbReference>
<evidence type="ECO:0000255" key="1">
    <source>
        <dbReference type="HAMAP-Rule" id="MF_01369"/>
    </source>
</evidence>
<evidence type="ECO:0000305" key="2"/>
<organism>
    <name type="scientific">Staphylococcus aureus (strain Mu50 / ATCC 700699)</name>
    <dbReference type="NCBI Taxonomy" id="158878"/>
    <lineage>
        <taxon>Bacteria</taxon>
        <taxon>Bacillati</taxon>
        <taxon>Bacillota</taxon>
        <taxon>Bacilli</taxon>
        <taxon>Bacillales</taxon>
        <taxon>Staphylococcaceae</taxon>
        <taxon>Staphylococcus</taxon>
    </lineage>
</organism>
<protein>
    <recommendedName>
        <fullName evidence="1">Large ribosomal subunit protein uL23</fullName>
    </recommendedName>
    <alternativeName>
        <fullName evidence="2">50S ribosomal protein L23</fullName>
    </alternativeName>
</protein>
<keyword id="KW-0687">Ribonucleoprotein</keyword>
<keyword id="KW-0689">Ribosomal protein</keyword>
<keyword id="KW-0694">RNA-binding</keyword>
<keyword id="KW-0699">rRNA-binding</keyword>